<gene>
    <name evidence="1" type="primary">bioD</name>
    <name type="ordered locus">VP1116</name>
</gene>
<protein>
    <recommendedName>
        <fullName evidence="1">ATP-dependent dethiobiotin synthetase BioD</fullName>
        <ecNumber evidence="1">6.3.3.3</ecNumber>
    </recommendedName>
    <alternativeName>
        <fullName evidence="1">DTB synthetase</fullName>
        <shortName evidence="1">DTBS</shortName>
    </alternativeName>
    <alternativeName>
        <fullName evidence="1">Dethiobiotin synthase</fullName>
    </alternativeName>
</protein>
<keyword id="KW-0067">ATP-binding</keyword>
<keyword id="KW-0093">Biotin biosynthesis</keyword>
<keyword id="KW-0963">Cytoplasm</keyword>
<keyword id="KW-0436">Ligase</keyword>
<keyword id="KW-0460">Magnesium</keyword>
<keyword id="KW-0479">Metal-binding</keyword>
<keyword id="KW-0547">Nucleotide-binding</keyword>
<proteinExistence type="inferred from homology"/>
<name>BIOD_VIBPA</name>
<organism>
    <name type="scientific">Vibrio parahaemolyticus serotype O3:K6 (strain RIMD 2210633)</name>
    <dbReference type="NCBI Taxonomy" id="223926"/>
    <lineage>
        <taxon>Bacteria</taxon>
        <taxon>Pseudomonadati</taxon>
        <taxon>Pseudomonadota</taxon>
        <taxon>Gammaproteobacteria</taxon>
        <taxon>Vibrionales</taxon>
        <taxon>Vibrionaceae</taxon>
        <taxon>Vibrio</taxon>
    </lineage>
</organism>
<comment type="function">
    <text evidence="1">Catalyzes a mechanistically unusual reaction, the ATP-dependent insertion of CO2 between the N7 and N8 nitrogen atoms of 7,8-diaminopelargonic acid (DAPA, also called 7,8-diammoniononanoate) to form a ureido ring.</text>
</comment>
<comment type="catalytic activity">
    <reaction evidence="1">
        <text>(7R,8S)-7,8-diammoniononanoate + CO2 + ATP = (4R,5S)-dethiobiotin + ADP + phosphate + 3 H(+)</text>
        <dbReference type="Rhea" id="RHEA:15805"/>
        <dbReference type="ChEBI" id="CHEBI:15378"/>
        <dbReference type="ChEBI" id="CHEBI:16526"/>
        <dbReference type="ChEBI" id="CHEBI:30616"/>
        <dbReference type="ChEBI" id="CHEBI:43474"/>
        <dbReference type="ChEBI" id="CHEBI:149469"/>
        <dbReference type="ChEBI" id="CHEBI:149473"/>
        <dbReference type="ChEBI" id="CHEBI:456216"/>
        <dbReference type="EC" id="6.3.3.3"/>
    </reaction>
</comment>
<comment type="cofactor">
    <cofactor evidence="1">
        <name>Mg(2+)</name>
        <dbReference type="ChEBI" id="CHEBI:18420"/>
    </cofactor>
</comment>
<comment type="pathway">
    <text evidence="1">Cofactor biosynthesis; biotin biosynthesis; biotin from 7,8-diaminononanoate: step 1/2.</text>
</comment>
<comment type="subunit">
    <text evidence="1">Homodimer.</text>
</comment>
<comment type="subcellular location">
    <subcellularLocation>
        <location evidence="1">Cytoplasm</location>
    </subcellularLocation>
</comment>
<comment type="similarity">
    <text evidence="1">Belongs to the dethiobiotin synthetase family.</text>
</comment>
<comment type="sequence caution" evidence="2">
    <conflict type="erroneous initiation">
        <sequence resource="EMBL-CDS" id="BAC59379"/>
    </conflict>
    <text>Extended N-terminus.</text>
</comment>
<sequence length="228" mass="24711">MIDAFFIAGTDTDVGKTVASKAVLQALAAKGLNTIGYKPVAAGSEKTEQGWRNSDALHLQKAATLEVAYEDVNPYALELPASPHIAAKHEQVEIEYDLLSEKLAQHKEQADVVLVEGAGGWRVPVSDTDSLSTWVQQEQLPVVLVVGIKLGCLSHALLTAEIIKADGLNLVGWIANRVNPGTEHYADIIEMLESRIDAPKLGEIPYIPSAKRKELGKYINVEPLLNID</sequence>
<evidence type="ECO:0000255" key="1">
    <source>
        <dbReference type="HAMAP-Rule" id="MF_00336"/>
    </source>
</evidence>
<evidence type="ECO:0000305" key="2"/>
<feature type="chain" id="PRO_0000187994" description="ATP-dependent dethiobiotin synthetase BioD">
    <location>
        <begin position="1"/>
        <end position="228"/>
    </location>
</feature>
<feature type="active site" evidence="1">
    <location>
        <position position="38"/>
    </location>
</feature>
<feature type="binding site" evidence="1">
    <location>
        <begin position="13"/>
        <end position="18"/>
    </location>
    <ligand>
        <name>ATP</name>
        <dbReference type="ChEBI" id="CHEBI:30616"/>
    </ligand>
</feature>
<feature type="binding site" evidence="1">
    <location>
        <position position="17"/>
    </location>
    <ligand>
        <name>Mg(2+)</name>
        <dbReference type="ChEBI" id="CHEBI:18420"/>
    </ligand>
</feature>
<feature type="binding site" evidence="1">
    <location>
        <position position="55"/>
    </location>
    <ligand>
        <name>ATP</name>
        <dbReference type="ChEBI" id="CHEBI:30616"/>
    </ligand>
</feature>
<feature type="binding site" evidence="1">
    <location>
        <position position="55"/>
    </location>
    <ligand>
        <name>Mg(2+)</name>
        <dbReference type="ChEBI" id="CHEBI:18420"/>
    </ligand>
</feature>
<feature type="binding site" evidence="1">
    <location>
        <begin position="116"/>
        <end position="119"/>
    </location>
    <ligand>
        <name>ATP</name>
        <dbReference type="ChEBI" id="CHEBI:30616"/>
    </ligand>
</feature>
<feature type="binding site" evidence="1">
    <location>
        <position position="116"/>
    </location>
    <ligand>
        <name>Mg(2+)</name>
        <dbReference type="ChEBI" id="CHEBI:18420"/>
    </ligand>
</feature>
<feature type="binding site" evidence="1">
    <location>
        <begin position="176"/>
        <end position="177"/>
    </location>
    <ligand>
        <name>ATP</name>
        <dbReference type="ChEBI" id="CHEBI:30616"/>
    </ligand>
</feature>
<feature type="binding site" evidence="1">
    <location>
        <begin position="205"/>
        <end position="207"/>
    </location>
    <ligand>
        <name>ATP</name>
        <dbReference type="ChEBI" id="CHEBI:30616"/>
    </ligand>
</feature>
<reference key="1">
    <citation type="journal article" date="2003" name="Lancet">
        <title>Genome sequence of Vibrio parahaemolyticus: a pathogenic mechanism distinct from that of V. cholerae.</title>
        <authorList>
            <person name="Makino K."/>
            <person name="Oshima K."/>
            <person name="Kurokawa K."/>
            <person name="Yokoyama K."/>
            <person name="Uda T."/>
            <person name="Tagomori K."/>
            <person name="Iijima Y."/>
            <person name="Najima M."/>
            <person name="Nakano M."/>
            <person name="Yamashita A."/>
            <person name="Kubota Y."/>
            <person name="Kimura S."/>
            <person name="Yasunaga T."/>
            <person name="Honda T."/>
            <person name="Shinagawa H."/>
            <person name="Hattori M."/>
            <person name="Iida T."/>
        </authorList>
    </citation>
    <scope>NUCLEOTIDE SEQUENCE [LARGE SCALE GENOMIC DNA]</scope>
    <source>
        <strain>RIMD 2210633</strain>
    </source>
</reference>
<dbReference type="EC" id="6.3.3.3" evidence="1"/>
<dbReference type="EMBL" id="BA000031">
    <property type="protein sequence ID" value="BAC59379.1"/>
    <property type="status" value="ALT_INIT"/>
    <property type="molecule type" value="Genomic_DNA"/>
</dbReference>
<dbReference type="RefSeq" id="NP_797495.1">
    <property type="nucleotide sequence ID" value="NC_004603.1"/>
</dbReference>
<dbReference type="RefSeq" id="WP_005460040.1">
    <property type="nucleotide sequence ID" value="NC_004603.1"/>
</dbReference>
<dbReference type="SMR" id="Q87QN3"/>
<dbReference type="GeneID" id="1188621"/>
<dbReference type="KEGG" id="vpa:VP1116"/>
<dbReference type="PATRIC" id="fig|223926.6.peg.1058"/>
<dbReference type="eggNOG" id="COG0132">
    <property type="taxonomic scope" value="Bacteria"/>
</dbReference>
<dbReference type="HOGENOM" id="CLU_072551_0_0_6"/>
<dbReference type="UniPathway" id="UPA00078">
    <property type="reaction ID" value="UER00161"/>
</dbReference>
<dbReference type="Proteomes" id="UP000002493">
    <property type="component" value="Chromosome 1"/>
</dbReference>
<dbReference type="GO" id="GO:0005829">
    <property type="term" value="C:cytosol"/>
    <property type="evidence" value="ECO:0007669"/>
    <property type="project" value="TreeGrafter"/>
</dbReference>
<dbReference type="GO" id="GO:0005524">
    <property type="term" value="F:ATP binding"/>
    <property type="evidence" value="ECO:0007669"/>
    <property type="project" value="UniProtKB-UniRule"/>
</dbReference>
<dbReference type="GO" id="GO:0004141">
    <property type="term" value="F:dethiobiotin synthase activity"/>
    <property type="evidence" value="ECO:0007669"/>
    <property type="project" value="UniProtKB-UniRule"/>
</dbReference>
<dbReference type="GO" id="GO:0000287">
    <property type="term" value="F:magnesium ion binding"/>
    <property type="evidence" value="ECO:0007669"/>
    <property type="project" value="UniProtKB-UniRule"/>
</dbReference>
<dbReference type="GO" id="GO:0009102">
    <property type="term" value="P:biotin biosynthetic process"/>
    <property type="evidence" value="ECO:0007669"/>
    <property type="project" value="UniProtKB-UniRule"/>
</dbReference>
<dbReference type="CDD" id="cd03109">
    <property type="entry name" value="DTBS"/>
    <property type="match status" value="1"/>
</dbReference>
<dbReference type="FunFam" id="3.40.50.300:FF:000292">
    <property type="entry name" value="ATP-dependent dethiobiotin synthetase BioD"/>
    <property type="match status" value="1"/>
</dbReference>
<dbReference type="Gene3D" id="3.40.50.300">
    <property type="entry name" value="P-loop containing nucleotide triphosphate hydrolases"/>
    <property type="match status" value="1"/>
</dbReference>
<dbReference type="HAMAP" id="MF_00336">
    <property type="entry name" value="BioD"/>
    <property type="match status" value="1"/>
</dbReference>
<dbReference type="InterPro" id="IPR004472">
    <property type="entry name" value="DTB_synth_BioD"/>
</dbReference>
<dbReference type="InterPro" id="IPR027417">
    <property type="entry name" value="P-loop_NTPase"/>
</dbReference>
<dbReference type="NCBIfam" id="TIGR00347">
    <property type="entry name" value="bioD"/>
    <property type="match status" value="1"/>
</dbReference>
<dbReference type="PANTHER" id="PTHR43210">
    <property type="entry name" value="DETHIOBIOTIN SYNTHETASE"/>
    <property type="match status" value="1"/>
</dbReference>
<dbReference type="PANTHER" id="PTHR43210:SF5">
    <property type="entry name" value="DETHIOBIOTIN SYNTHETASE"/>
    <property type="match status" value="1"/>
</dbReference>
<dbReference type="Pfam" id="PF13500">
    <property type="entry name" value="AAA_26"/>
    <property type="match status" value="1"/>
</dbReference>
<dbReference type="PIRSF" id="PIRSF006755">
    <property type="entry name" value="DTB_synth"/>
    <property type="match status" value="1"/>
</dbReference>
<dbReference type="SUPFAM" id="SSF52540">
    <property type="entry name" value="P-loop containing nucleoside triphosphate hydrolases"/>
    <property type="match status" value="1"/>
</dbReference>
<accession>Q87QN3</accession>